<protein>
    <recommendedName>
        <fullName evidence="1">Phosphoglucosamine mutase</fullName>
        <ecNumber evidence="1">5.4.2.10</ecNumber>
    </recommendedName>
</protein>
<evidence type="ECO:0000255" key="1">
    <source>
        <dbReference type="HAMAP-Rule" id="MF_01554"/>
    </source>
</evidence>
<comment type="function">
    <text evidence="1">Catalyzes the conversion of glucosamine-6-phosphate to glucosamine-1-phosphate.</text>
</comment>
<comment type="catalytic activity">
    <reaction evidence="1">
        <text>alpha-D-glucosamine 1-phosphate = D-glucosamine 6-phosphate</text>
        <dbReference type="Rhea" id="RHEA:23424"/>
        <dbReference type="ChEBI" id="CHEBI:58516"/>
        <dbReference type="ChEBI" id="CHEBI:58725"/>
        <dbReference type="EC" id="5.4.2.10"/>
    </reaction>
</comment>
<comment type="cofactor">
    <cofactor evidence="1">
        <name>Mg(2+)</name>
        <dbReference type="ChEBI" id="CHEBI:18420"/>
    </cofactor>
    <text evidence="1">Binds 1 Mg(2+) ion per subunit.</text>
</comment>
<comment type="PTM">
    <text evidence="1">Activated by phosphorylation.</text>
</comment>
<comment type="similarity">
    <text evidence="1">Belongs to the phosphohexose mutase family.</text>
</comment>
<name>GLMM_ALIB4</name>
<keyword id="KW-0413">Isomerase</keyword>
<keyword id="KW-0460">Magnesium</keyword>
<keyword id="KW-0479">Metal-binding</keyword>
<keyword id="KW-0597">Phosphoprotein</keyword>
<keyword id="KW-1185">Reference proteome</keyword>
<sequence length="444" mass="48636">MKLFGTDGVRGKAGDFLDAITVLKLAKAAGIYFRKHSTTNKILVGKDTRRSGYMIENALVSGLTAVGYDVIQIGPMPTPAIAYLTESMRCDAGIMISASHNPFEDNGIKFFDNHGNKLNTTCEEEIENIFNDMDLMQSEQVTGRDIGSSKRIDDVIGRYIVAIKSSFPKNLTLKGLRIILDCANGAAYKVGPTILEELGADVITINNKPNGFNINENCGAMHPETVSNLVKEYRADIGLALDGDADRLVVIDEKGEIVDGDNLLGALSVYLKNENLLKGDACVATVMSNKALEDYLQKNKISLFRSNVGDKYVLEVMKEKGINFGGEQSGHIIFSDIAKTGDGLASALQVLALIIKSGKKASEILNPFSLYPQILHNMKVTEKIPLEQITGLEEVLKPIRQKGLRDLIRYSGTENKIRLLLEGKNKKDVEDAMQTLIAFFKKAL</sequence>
<proteinExistence type="inferred from homology"/>
<organism>
    <name type="scientific">Aliarcobacter butzleri (strain RM4018)</name>
    <name type="common">Arcobacter butzleri</name>
    <dbReference type="NCBI Taxonomy" id="367737"/>
    <lineage>
        <taxon>Bacteria</taxon>
        <taxon>Pseudomonadati</taxon>
        <taxon>Campylobacterota</taxon>
        <taxon>Epsilonproteobacteria</taxon>
        <taxon>Campylobacterales</taxon>
        <taxon>Arcobacteraceae</taxon>
        <taxon>Aliarcobacter</taxon>
    </lineage>
</organism>
<reference key="1">
    <citation type="journal article" date="2007" name="PLoS ONE">
        <title>The complete genome sequence and analysis of the Epsilonproteobacterium Arcobacter butzleri.</title>
        <authorList>
            <person name="Miller W.G."/>
            <person name="Parker C.T."/>
            <person name="Rubenfield M."/>
            <person name="Mendz G.L."/>
            <person name="Woesten M.M.S.M."/>
            <person name="Ussery D.W."/>
            <person name="Stolz J.F."/>
            <person name="Binnewies T.T."/>
            <person name="Hallin P.F."/>
            <person name="Wang G."/>
            <person name="Malek J.A."/>
            <person name="Rogosin A."/>
            <person name="Stanker L.H."/>
            <person name="Mandrell R.E."/>
        </authorList>
    </citation>
    <scope>NUCLEOTIDE SEQUENCE [LARGE SCALE GENOMIC DNA]</scope>
    <source>
        <strain>RM4018</strain>
    </source>
</reference>
<gene>
    <name evidence="1" type="primary">glmM</name>
    <name type="ordered locus">Abu_0081</name>
</gene>
<feature type="chain" id="PRO_1000068887" description="Phosphoglucosamine mutase">
    <location>
        <begin position="1"/>
        <end position="444"/>
    </location>
</feature>
<feature type="active site" description="Phosphoserine intermediate" evidence="1">
    <location>
        <position position="99"/>
    </location>
</feature>
<feature type="binding site" description="via phosphate group" evidence="1">
    <location>
        <position position="99"/>
    </location>
    <ligand>
        <name>Mg(2+)</name>
        <dbReference type="ChEBI" id="CHEBI:18420"/>
    </ligand>
</feature>
<feature type="binding site" evidence="1">
    <location>
        <position position="242"/>
    </location>
    <ligand>
        <name>Mg(2+)</name>
        <dbReference type="ChEBI" id="CHEBI:18420"/>
    </ligand>
</feature>
<feature type="binding site" evidence="1">
    <location>
        <position position="244"/>
    </location>
    <ligand>
        <name>Mg(2+)</name>
        <dbReference type="ChEBI" id="CHEBI:18420"/>
    </ligand>
</feature>
<feature type="binding site" evidence="1">
    <location>
        <position position="246"/>
    </location>
    <ligand>
        <name>Mg(2+)</name>
        <dbReference type="ChEBI" id="CHEBI:18420"/>
    </ligand>
</feature>
<feature type="modified residue" description="Phosphoserine" evidence="1">
    <location>
        <position position="99"/>
    </location>
</feature>
<dbReference type="EC" id="5.4.2.10" evidence="1"/>
<dbReference type="EMBL" id="CP000361">
    <property type="protein sequence ID" value="ABV66366.1"/>
    <property type="molecule type" value="Genomic_DNA"/>
</dbReference>
<dbReference type="RefSeq" id="WP_012011986.1">
    <property type="nucleotide sequence ID" value="NC_009850.1"/>
</dbReference>
<dbReference type="SMR" id="A8EQZ2"/>
<dbReference type="STRING" id="367737.Abu_0081"/>
<dbReference type="GeneID" id="24304378"/>
<dbReference type="KEGG" id="abu:Abu_0081"/>
<dbReference type="eggNOG" id="COG1109">
    <property type="taxonomic scope" value="Bacteria"/>
</dbReference>
<dbReference type="HOGENOM" id="CLU_016950_7_0_7"/>
<dbReference type="Proteomes" id="UP000001136">
    <property type="component" value="Chromosome"/>
</dbReference>
<dbReference type="GO" id="GO:0005829">
    <property type="term" value="C:cytosol"/>
    <property type="evidence" value="ECO:0007669"/>
    <property type="project" value="TreeGrafter"/>
</dbReference>
<dbReference type="GO" id="GO:0000287">
    <property type="term" value="F:magnesium ion binding"/>
    <property type="evidence" value="ECO:0007669"/>
    <property type="project" value="UniProtKB-UniRule"/>
</dbReference>
<dbReference type="GO" id="GO:0008966">
    <property type="term" value="F:phosphoglucosamine mutase activity"/>
    <property type="evidence" value="ECO:0007669"/>
    <property type="project" value="UniProtKB-UniRule"/>
</dbReference>
<dbReference type="GO" id="GO:0004615">
    <property type="term" value="F:phosphomannomutase activity"/>
    <property type="evidence" value="ECO:0007669"/>
    <property type="project" value="TreeGrafter"/>
</dbReference>
<dbReference type="GO" id="GO:0005975">
    <property type="term" value="P:carbohydrate metabolic process"/>
    <property type="evidence" value="ECO:0007669"/>
    <property type="project" value="InterPro"/>
</dbReference>
<dbReference type="GO" id="GO:0009252">
    <property type="term" value="P:peptidoglycan biosynthetic process"/>
    <property type="evidence" value="ECO:0007669"/>
    <property type="project" value="TreeGrafter"/>
</dbReference>
<dbReference type="GO" id="GO:0006048">
    <property type="term" value="P:UDP-N-acetylglucosamine biosynthetic process"/>
    <property type="evidence" value="ECO:0007669"/>
    <property type="project" value="TreeGrafter"/>
</dbReference>
<dbReference type="CDD" id="cd05802">
    <property type="entry name" value="GlmM"/>
    <property type="match status" value="1"/>
</dbReference>
<dbReference type="FunFam" id="3.40.120.10:FF:000001">
    <property type="entry name" value="Phosphoglucosamine mutase"/>
    <property type="match status" value="1"/>
</dbReference>
<dbReference type="FunFam" id="3.40.120.10:FF:000003">
    <property type="entry name" value="Phosphoglucosamine mutase"/>
    <property type="match status" value="1"/>
</dbReference>
<dbReference type="Gene3D" id="3.40.120.10">
    <property type="entry name" value="Alpha-D-Glucose-1,6-Bisphosphate, subunit A, domain 3"/>
    <property type="match status" value="3"/>
</dbReference>
<dbReference type="Gene3D" id="3.30.310.50">
    <property type="entry name" value="Alpha-D-phosphohexomutase, C-terminal domain"/>
    <property type="match status" value="1"/>
</dbReference>
<dbReference type="HAMAP" id="MF_01554_B">
    <property type="entry name" value="GlmM_B"/>
    <property type="match status" value="1"/>
</dbReference>
<dbReference type="InterPro" id="IPR005844">
    <property type="entry name" value="A-D-PHexomutase_a/b/a-I"/>
</dbReference>
<dbReference type="InterPro" id="IPR016055">
    <property type="entry name" value="A-D-PHexomutase_a/b/a-I/II/III"/>
</dbReference>
<dbReference type="InterPro" id="IPR005845">
    <property type="entry name" value="A-D-PHexomutase_a/b/a-II"/>
</dbReference>
<dbReference type="InterPro" id="IPR005846">
    <property type="entry name" value="A-D-PHexomutase_a/b/a-III"/>
</dbReference>
<dbReference type="InterPro" id="IPR005843">
    <property type="entry name" value="A-D-PHexomutase_C"/>
</dbReference>
<dbReference type="InterPro" id="IPR036900">
    <property type="entry name" value="A-D-PHexomutase_C_sf"/>
</dbReference>
<dbReference type="InterPro" id="IPR016066">
    <property type="entry name" value="A-D-PHexomutase_CS"/>
</dbReference>
<dbReference type="InterPro" id="IPR005841">
    <property type="entry name" value="Alpha-D-phosphohexomutase_SF"/>
</dbReference>
<dbReference type="InterPro" id="IPR006352">
    <property type="entry name" value="GlmM_bact"/>
</dbReference>
<dbReference type="InterPro" id="IPR050060">
    <property type="entry name" value="Phosphoglucosamine_mutase"/>
</dbReference>
<dbReference type="NCBIfam" id="TIGR01455">
    <property type="entry name" value="glmM"/>
    <property type="match status" value="1"/>
</dbReference>
<dbReference type="NCBIfam" id="NF008139">
    <property type="entry name" value="PRK10887.1"/>
    <property type="match status" value="1"/>
</dbReference>
<dbReference type="PANTHER" id="PTHR42946:SF1">
    <property type="entry name" value="PHOSPHOGLUCOMUTASE (ALPHA-D-GLUCOSE-1,6-BISPHOSPHATE-DEPENDENT)"/>
    <property type="match status" value="1"/>
</dbReference>
<dbReference type="PANTHER" id="PTHR42946">
    <property type="entry name" value="PHOSPHOHEXOSE MUTASE"/>
    <property type="match status" value="1"/>
</dbReference>
<dbReference type="Pfam" id="PF02878">
    <property type="entry name" value="PGM_PMM_I"/>
    <property type="match status" value="1"/>
</dbReference>
<dbReference type="Pfam" id="PF02879">
    <property type="entry name" value="PGM_PMM_II"/>
    <property type="match status" value="1"/>
</dbReference>
<dbReference type="Pfam" id="PF02880">
    <property type="entry name" value="PGM_PMM_III"/>
    <property type="match status" value="1"/>
</dbReference>
<dbReference type="Pfam" id="PF00408">
    <property type="entry name" value="PGM_PMM_IV"/>
    <property type="match status" value="1"/>
</dbReference>
<dbReference type="PRINTS" id="PR00509">
    <property type="entry name" value="PGMPMM"/>
</dbReference>
<dbReference type="SUPFAM" id="SSF55957">
    <property type="entry name" value="Phosphoglucomutase, C-terminal domain"/>
    <property type="match status" value="1"/>
</dbReference>
<dbReference type="SUPFAM" id="SSF53738">
    <property type="entry name" value="Phosphoglucomutase, first 3 domains"/>
    <property type="match status" value="3"/>
</dbReference>
<dbReference type="PROSITE" id="PS00710">
    <property type="entry name" value="PGM_PMM"/>
    <property type="match status" value="1"/>
</dbReference>
<accession>A8EQZ2</accession>